<sequence>MTDTIKIGVGGPVGAGKHELIEKIVKRLAKDMSIGVITNDIYTKEDEKILVNSGVLPEDRIIGVETGGCPHTAIREDASMNFAAIDELKERNDDIELIFIESGGDNLAATFSPELVDFSIYIIDVAQGEKIPRKGGQGMIKSDFFVINKTDLAPYVGASLERMAEDTKVFRGNRPFTFTNLKTDEGLDEVIEWIEQYVFLKGLA</sequence>
<reference key="1">
    <citation type="thesis" date="1994" institute="Saarland University" country="Germany">
        <authorList>
            <person name="Jose J."/>
        </authorList>
    </citation>
    <scope>NUCLEOTIDE SEQUENCE [GENOMIC DNA]</scope>
    <source>
        <strain>DSM 20267 / Isolate C2A</strain>
    </source>
</reference>
<feature type="chain" id="PRO_0000067672" description="Urease accessory protein UreG">
    <location>
        <begin position="1"/>
        <end position="204"/>
    </location>
</feature>
<feature type="binding site" evidence="1">
    <location>
        <begin position="11"/>
        <end position="18"/>
    </location>
    <ligand>
        <name>GTP</name>
        <dbReference type="ChEBI" id="CHEBI:37565"/>
    </ligand>
</feature>
<protein>
    <recommendedName>
        <fullName evidence="1">Urease accessory protein UreG</fullName>
    </recommendedName>
</protein>
<accession>P42877</accession>
<gene>
    <name evidence="1" type="primary">ureG</name>
</gene>
<dbReference type="EMBL" id="Z35136">
    <property type="protein sequence ID" value="CAA84509.1"/>
    <property type="molecule type" value="Genomic_DNA"/>
</dbReference>
<dbReference type="SMR" id="P42877"/>
<dbReference type="STRING" id="1288.AWC37_10780"/>
<dbReference type="eggNOG" id="COG0378">
    <property type="taxonomic scope" value="Bacteria"/>
</dbReference>
<dbReference type="GO" id="GO:0005737">
    <property type="term" value="C:cytoplasm"/>
    <property type="evidence" value="ECO:0007669"/>
    <property type="project" value="UniProtKB-SubCell"/>
</dbReference>
<dbReference type="GO" id="GO:0005525">
    <property type="term" value="F:GTP binding"/>
    <property type="evidence" value="ECO:0007669"/>
    <property type="project" value="UniProtKB-KW"/>
</dbReference>
<dbReference type="GO" id="GO:0003924">
    <property type="term" value="F:GTPase activity"/>
    <property type="evidence" value="ECO:0007669"/>
    <property type="project" value="InterPro"/>
</dbReference>
<dbReference type="GO" id="GO:0016151">
    <property type="term" value="F:nickel cation binding"/>
    <property type="evidence" value="ECO:0007669"/>
    <property type="project" value="UniProtKB-UniRule"/>
</dbReference>
<dbReference type="GO" id="GO:0043419">
    <property type="term" value="P:urea catabolic process"/>
    <property type="evidence" value="ECO:0007669"/>
    <property type="project" value="InterPro"/>
</dbReference>
<dbReference type="CDD" id="cd05540">
    <property type="entry name" value="UreG"/>
    <property type="match status" value="1"/>
</dbReference>
<dbReference type="Gene3D" id="3.40.50.300">
    <property type="entry name" value="P-loop containing nucleotide triphosphate hydrolases"/>
    <property type="match status" value="1"/>
</dbReference>
<dbReference type="HAMAP" id="MF_01389">
    <property type="entry name" value="UreG"/>
    <property type="match status" value="1"/>
</dbReference>
<dbReference type="InterPro" id="IPR003495">
    <property type="entry name" value="CobW/HypB/UreG_nucleotide-bd"/>
</dbReference>
<dbReference type="InterPro" id="IPR027417">
    <property type="entry name" value="P-loop_NTPase"/>
</dbReference>
<dbReference type="InterPro" id="IPR004400">
    <property type="entry name" value="UreG"/>
</dbReference>
<dbReference type="NCBIfam" id="TIGR00101">
    <property type="entry name" value="ureG"/>
    <property type="match status" value="1"/>
</dbReference>
<dbReference type="PANTHER" id="PTHR31715">
    <property type="entry name" value="UREASE ACCESSORY PROTEIN G"/>
    <property type="match status" value="1"/>
</dbReference>
<dbReference type="PANTHER" id="PTHR31715:SF0">
    <property type="entry name" value="UREASE ACCESSORY PROTEIN G"/>
    <property type="match status" value="1"/>
</dbReference>
<dbReference type="Pfam" id="PF02492">
    <property type="entry name" value="cobW"/>
    <property type="match status" value="1"/>
</dbReference>
<dbReference type="PIRSF" id="PIRSF005624">
    <property type="entry name" value="Ni-bind_GTPase"/>
    <property type="match status" value="1"/>
</dbReference>
<dbReference type="SUPFAM" id="SSF52540">
    <property type="entry name" value="P-loop containing nucleoside triphosphate hydrolases"/>
    <property type="match status" value="1"/>
</dbReference>
<evidence type="ECO:0000255" key="1">
    <source>
        <dbReference type="HAMAP-Rule" id="MF_01389"/>
    </source>
</evidence>
<name>UREG_STAXY</name>
<comment type="function">
    <text evidence="1">Facilitates the functional incorporation of the urease nickel metallocenter. This process requires GTP hydrolysis, probably effectuated by UreG.</text>
</comment>
<comment type="subunit">
    <text evidence="1">Homodimer. UreD, UreF and UreG form a complex that acts as a GTP-hydrolysis-dependent molecular chaperone, activating the urease apoprotein by helping to assemble the nickel containing metallocenter of UreC. The UreE protein probably delivers the nickel.</text>
</comment>
<comment type="subcellular location">
    <subcellularLocation>
        <location evidence="1">Cytoplasm</location>
    </subcellularLocation>
</comment>
<comment type="similarity">
    <text evidence="1">Belongs to the SIMIBI class G3E GTPase family. UreG subfamily.</text>
</comment>
<organism>
    <name type="scientific">Staphylococcus xylosus</name>
    <dbReference type="NCBI Taxonomy" id="1288"/>
    <lineage>
        <taxon>Bacteria</taxon>
        <taxon>Bacillati</taxon>
        <taxon>Bacillota</taxon>
        <taxon>Bacilli</taxon>
        <taxon>Bacillales</taxon>
        <taxon>Staphylococcaceae</taxon>
        <taxon>Staphylococcus</taxon>
    </lineage>
</organism>
<proteinExistence type="inferred from homology"/>
<keyword id="KW-0143">Chaperone</keyword>
<keyword id="KW-0963">Cytoplasm</keyword>
<keyword id="KW-0342">GTP-binding</keyword>
<keyword id="KW-0996">Nickel insertion</keyword>
<keyword id="KW-0547">Nucleotide-binding</keyword>